<evidence type="ECO:0000255" key="1"/>
<evidence type="ECO:0000255" key="2">
    <source>
        <dbReference type="PROSITE-ProRule" id="PRU00498"/>
    </source>
</evidence>
<evidence type="ECO:0000256" key="3">
    <source>
        <dbReference type="SAM" id="MobiDB-lite"/>
    </source>
</evidence>
<evidence type="ECO:0000269" key="4">
    <source>
    </source>
</evidence>
<evidence type="ECO:0000303" key="5">
    <source>
    </source>
</evidence>
<evidence type="ECO:0000305" key="6"/>
<evidence type="ECO:0000305" key="7">
    <source>
    </source>
</evidence>
<name>CHSE_ASPNC</name>
<comment type="function">
    <text evidence="4 7">Polymerizes chitin, a structural polymer of the cell wall and septum, by transferring the sugar moiety of UDP-GlcNAc to the non-reducing end of the growing chitin polymer (Probable). Plays an important role in septal growth or maintenance (PubMed:38468360). Mediates colony spore formation (PubMed:38468360). ChsE and chsD seem to play a functionally redundant role in lateral cell wall chitin synthesis (PubMed:38468360). Involved in resistance to echinocandins (PubMed:38468360).</text>
</comment>
<comment type="catalytic activity">
    <reaction evidence="7">
        <text>[(1-&gt;4)-N-acetyl-beta-D-glucosaminyl](n) + UDP-N-acetyl-alpha-D-glucosamine = [(1-&gt;4)-N-acetyl-beta-D-glucosaminyl](n+1) + UDP + H(+)</text>
        <dbReference type="Rhea" id="RHEA:16637"/>
        <dbReference type="Rhea" id="RHEA-COMP:9593"/>
        <dbReference type="Rhea" id="RHEA-COMP:9595"/>
        <dbReference type="ChEBI" id="CHEBI:15378"/>
        <dbReference type="ChEBI" id="CHEBI:17029"/>
        <dbReference type="ChEBI" id="CHEBI:57705"/>
        <dbReference type="ChEBI" id="CHEBI:58223"/>
        <dbReference type="EC" id="2.4.1.16"/>
    </reaction>
    <physiologicalReaction direction="left-to-right" evidence="7">
        <dbReference type="Rhea" id="RHEA:16638"/>
    </physiologicalReaction>
</comment>
<comment type="subcellular location">
    <subcellularLocation>
        <location evidence="7">Cell membrane</location>
        <topology evidence="1">Multi-pass membrane protein</topology>
    </subcellularLocation>
</comment>
<comment type="disruption phenotype">
    <text evidence="4">Reduces drastically spore production and leads to strong retarded radial growth rates (PubMed:38468360). Increases the resistance to echinocandins (PubMed:38468360). Leads to resistance to AFP, a small, basic and cysteine-rich peptide that exerts extremely potent antifungal activity by inhibitiing cell wall chitin biosynthesis (PubMed:38468360).</text>
</comment>
<comment type="similarity">
    <text evidence="6">Belongs to the chitin synthase family. Class III subfamily.</text>
</comment>
<sequence>MGTPTPYSAHSPRDSESSYFSHTSPPHGEHEHDEQEQSLLERNNSSHYGTPFDDPAVSTDSLRRYTLHDDGPAVFAAPPYQESEAASENTFRARSNGDKASREGSRAGALRRYGTRKINLVQGSVLSVDYPVPSAIQNAIQPQYRDAEEAFSEEFTHMRYTAATCDPDEFTLRNGYNLRPAIYNRHTELLIAITYYNEDKVLTARTLHGVMQNIRDIVNLKKSEFWNKGGPAWQKIVVCLVFDGIEPCDKNTLDVLATIGIYQDGVMKKDVDGRETVAHVFEYTTQLSVTPTQQLIRPQGNESTNLPPVQMIFCLKQKNSKKINSHRWLFNAFSRILNPEVVILLDAGTKPGHKSLLALWEAFYNDKTLGGACGEIHAMLGQGWRKVINPLVAAQNFEYKISNILDKPLESAFGYVSVLPGAFSAYRYRAIMGRPLEQYFHGDHTLSKRLGKKGIDGMNIFKKNMFLAEDRILCFELVAKAGFKWHLSYVKASKGETDVPEGAAEFISQRRRWLNGSFAAGLYAIMHFGRIYRSGHSIIRMFFLHIQMLYNVCQLIMTWFSLASYWLTSSVIMDLVGTPSTSNKNKGWPWGNEASPIVNNFVKYGYVWVLTLQFIMALGNRPKGVKIPYILSYLYFSLVQLYVLILSFYLVVGAFNGGMMDFNFDEGVGTFLSSFFSSSGGGIVLIALVSTYGIYIIASVLYMDPWHIITSSWAYFLGMTTSINILMVYAFCNWHDVSWGTKGSDKAEALPSAQTKKDDDNKQNFIEEIDKPQADIDSQFEATVKRALTPWIEPEEEGGKSLDDAYRNFRTVLVCLWVFSNLLVTLLITATGVDKMCLTNTSTTRTSWYFEVILWITAGLSLFRFIGSLWFLGRSGILCCVSRR</sequence>
<protein>
    <recommendedName>
        <fullName evidence="5">Chitin synthase E</fullName>
        <ecNumber evidence="7">2.4.1.16</ecNumber>
    </recommendedName>
    <alternativeName>
        <fullName evidence="6">Chitin-UDP acetyl-glucosaminyl transferase E</fullName>
    </alternativeName>
    <alternativeName>
        <fullName evidence="5">Class-III chitin synthase E</fullName>
    </alternativeName>
</protein>
<proteinExistence type="inferred from homology"/>
<keyword id="KW-1003">Cell membrane</keyword>
<keyword id="KW-0961">Cell wall biogenesis/degradation</keyword>
<keyword id="KW-0325">Glycoprotein</keyword>
<keyword id="KW-0328">Glycosyltransferase</keyword>
<keyword id="KW-0472">Membrane</keyword>
<keyword id="KW-1185">Reference proteome</keyword>
<keyword id="KW-0808">Transferase</keyword>
<keyword id="KW-0812">Transmembrane</keyword>
<keyword id="KW-1133">Transmembrane helix</keyword>
<feature type="chain" id="PRO_0000460979" description="Chitin synthase E">
    <location>
        <begin position="1"/>
        <end position="884"/>
    </location>
</feature>
<feature type="transmembrane region" description="Helical" evidence="1">
    <location>
        <begin position="513"/>
        <end position="532"/>
    </location>
</feature>
<feature type="transmembrane region" description="Helical" evidence="1">
    <location>
        <begin position="556"/>
        <end position="576"/>
    </location>
</feature>
<feature type="transmembrane region" description="Helical" evidence="1">
    <location>
        <begin position="597"/>
        <end position="617"/>
    </location>
</feature>
<feature type="transmembrane region" description="Helical" evidence="1">
    <location>
        <begin position="635"/>
        <end position="655"/>
    </location>
</feature>
<feature type="transmembrane region" description="Helical" evidence="1">
    <location>
        <begin position="681"/>
        <end position="701"/>
    </location>
</feature>
<feature type="transmembrane region" description="Helical" evidence="1">
    <location>
        <begin position="708"/>
        <end position="728"/>
    </location>
</feature>
<feature type="transmembrane region" description="Helical" evidence="1">
    <location>
        <begin position="812"/>
        <end position="832"/>
    </location>
</feature>
<feature type="transmembrane region" description="Helical" evidence="1">
    <location>
        <begin position="852"/>
        <end position="872"/>
    </location>
</feature>
<feature type="region of interest" description="Disordered" evidence="3">
    <location>
        <begin position="1"/>
        <end position="58"/>
    </location>
</feature>
<feature type="region of interest" description="Disordered" evidence="3">
    <location>
        <begin position="73"/>
        <end position="108"/>
    </location>
</feature>
<feature type="compositionally biased region" description="Polar residues" evidence="3">
    <location>
        <begin position="37"/>
        <end position="48"/>
    </location>
</feature>
<feature type="compositionally biased region" description="Polar residues" evidence="3">
    <location>
        <begin position="84"/>
        <end position="93"/>
    </location>
</feature>
<feature type="compositionally biased region" description="Basic and acidic residues" evidence="3">
    <location>
        <begin position="95"/>
        <end position="105"/>
    </location>
</feature>
<feature type="glycosylation site" description="N-linked (GlcNAc...) asparagine" evidence="2">
    <location>
        <position position="44"/>
    </location>
</feature>
<feature type="glycosylation site" description="N-linked (GlcNAc...) asparagine" evidence="2">
    <location>
        <position position="301"/>
    </location>
</feature>
<feature type="glycosylation site" description="N-linked (GlcNAc...) asparagine" evidence="2">
    <location>
        <position position="840"/>
    </location>
</feature>
<accession>A2R0Z5</accession>
<organism>
    <name type="scientific">Aspergillus niger (strain ATCC MYA-4892 / CBS 513.88 / FGSC A1513)</name>
    <dbReference type="NCBI Taxonomy" id="425011"/>
    <lineage>
        <taxon>Eukaryota</taxon>
        <taxon>Fungi</taxon>
        <taxon>Dikarya</taxon>
        <taxon>Ascomycota</taxon>
        <taxon>Pezizomycotina</taxon>
        <taxon>Eurotiomycetes</taxon>
        <taxon>Eurotiomycetidae</taxon>
        <taxon>Eurotiales</taxon>
        <taxon>Aspergillaceae</taxon>
        <taxon>Aspergillus</taxon>
        <taxon>Aspergillus subgen. Circumdati</taxon>
    </lineage>
</organism>
<dbReference type="EC" id="2.4.1.16" evidence="7"/>
<dbReference type="EMBL" id="AM270291">
    <property type="protein sequence ID" value="CAK41385.1"/>
    <property type="molecule type" value="Genomic_DNA"/>
</dbReference>
<dbReference type="RefSeq" id="XP_001396084.1">
    <property type="nucleotide sequence ID" value="XM_001396047.2"/>
</dbReference>
<dbReference type="SMR" id="A2R0Z5"/>
<dbReference type="CAZy" id="GT2">
    <property type="family name" value="Glycosyltransferase Family 2"/>
</dbReference>
<dbReference type="EnsemblFungi" id="CAK41385">
    <property type="protein sequence ID" value="CAK41385"/>
    <property type="gene ID" value="An12g10380"/>
</dbReference>
<dbReference type="GeneID" id="4986391"/>
<dbReference type="KEGG" id="ang:An12g10380"/>
<dbReference type="HOGENOM" id="CLU_004760_0_1_1"/>
<dbReference type="Proteomes" id="UP000006706">
    <property type="component" value="Chromosome 3L"/>
</dbReference>
<dbReference type="GO" id="GO:0030428">
    <property type="term" value="C:cell septum"/>
    <property type="evidence" value="ECO:0007669"/>
    <property type="project" value="TreeGrafter"/>
</dbReference>
<dbReference type="GO" id="GO:0005886">
    <property type="term" value="C:plasma membrane"/>
    <property type="evidence" value="ECO:0007669"/>
    <property type="project" value="UniProtKB-SubCell"/>
</dbReference>
<dbReference type="GO" id="GO:0004100">
    <property type="term" value="F:chitin synthase activity"/>
    <property type="evidence" value="ECO:0007669"/>
    <property type="project" value="UniProtKB-EC"/>
</dbReference>
<dbReference type="GO" id="GO:0071555">
    <property type="term" value="P:cell wall organization"/>
    <property type="evidence" value="ECO:0007669"/>
    <property type="project" value="UniProtKB-KW"/>
</dbReference>
<dbReference type="GO" id="GO:0006031">
    <property type="term" value="P:chitin biosynthetic process"/>
    <property type="evidence" value="ECO:0007669"/>
    <property type="project" value="InterPro"/>
</dbReference>
<dbReference type="CDD" id="cd04190">
    <property type="entry name" value="Chitin_synth_C"/>
    <property type="match status" value="1"/>
</dbReference>
<dbReference type="InterPro" id="IPR004835">
    <property type="entry name" value="Chitin_synth"/>
</dbReference>
<dbReference type="InterPro" id="IPR004834">
    <property type="entry name" value="Chitin_synth_fun"/>
</dbReference>
<dbReference type="InterPro" id="IPR013616">
    <property type="entry name" value="Chitin_synth_N"/>
</dbReference>
<dbReference type="InterPro" id="IPR029044">
    <property type="entry name" value="Nucleotide-diphossugar_trans"/>
</dbReference>
<dbReference type="PANTHER" id="PTHR22914">
    <property type="entry name" value="CHITIN SYNTHASE"/>
    <property type="match status" value="1"/>
</dbReference>
<dbReference type="PANTHER" id="PTHR22914:SF39">
    <property type="entry name" value="CHITIN SYNTHASE"/>
    <property type="match status" value="1"/>
</dbReference>
<dbReference type="Pfam" id="PF01644">
    <property type="entry name" value="Chitin_synth_1"/>
    <property type="match status" value="1"/>
</dbReference>
<dbReference type="Pfam" id="PF08407">
    <property type="entry name" value="Chitin_synth_1N"/>
    <property type="match status" value="1"/>
</dbReference>
<dbReference type="SUPFAM" id="SSF53448">
    <property type="entry name" value="Nucleotide-diphospho-sugar transferases"/>
    <property type="match status" value="1"/>
</dbReference>
<reference key="1">
    <citation type="journal article" date="2007" name="Nat. Biotechnol.">
        <title>Genome sequencing and analysis of the versatile cell factory Aspergillus niger CBS 513.88.</title>
        <authorList>
            <person name="Pel H.J."/>
            <person name="de Winde J.H."/>
            <person name="Archer D.B."/>
            <person name="Dyer P.S."/>
            <person name="Hofmann G."/>
            <person name="Schaap P.J."/>
            <person name="Turner G."/>
            <person name="de Vries R.P."/>
            <person name="Albang R."/>
            <person name="Albermann K."/>
            <person name="Andersen M.R."/>
            <person name="Bendtsen J.D."/>
            <person name="Benen J.A.E."/>
            <person name="van den Berg M."/>
            <person name="Breestraat S."/>
            <person name="Caddick M.X."/>
            <person name="Contreras R."/>
            <person name="Cornell M."/>
            <person name="Coutinho P.M."/>
            <person name="Danchin E.G.J."/>
            <person name="Debets A.J.M."/>
            <person name="Dekker P."/>
            <person name="van Dijck P.W.M."/>
            <person name="van Dijk A."/>
            <person name="Dijkhuizen L."/>
            <person name="Driessen A.J.M."/>
            <person name="d'Enfert C."/>
            <person name="Geysens S."/>
            <person name="Goosen C."/>
            <person name="Groot G.S.P."/>
            <person name="de Groot P.W.J."/>
            <person name="Guillemette T."/>
            <person name="Henrissat B."/>
            <person name="Herweijer M."/>
            <person name="van den Hombergh J.P.T.W."/>
            <person name="van den Hondel C.A.M.J.J."/>
            <person name="van der Heijden R.T.J.M."/>
            <person name="van der Kaaij R.M."/>
            <person name="Klis F.M."/>
            <person name="Kools H.J."/>
            <person name="Kubicek C.P."/>
            <person name="van Kuyk P.A."/>
            <person name="Lauber J."/>
            <person name="Lu X."/>
            <person name="van der Maarel M.J.E.C."/>
            <person name="Meulenberg R."/>
            <person name="Menke H."/>
            <person name="Mortimer M.A."/>
            <person name="Nielsen J."/>
            <person name="Oliver S.G."/>
            <person name="Olsthoorn M."/>
            <person name="Pal K."/>
            <person name="van Peij N.N.M.E."/>
            <person name="Ram A.F.J."/>
            <person name="Rinas U."/>
            <person name="Roubos J.A."/>
            <person name="Sagt C.M.J."/>
            <person name="Schmoll M."/>
            <person name="Sun J."/>
            <person name="Ussery D."/>
            <person name="Varga J."/>
            <person name="Vervecken W."/>
            <person name="van de Vondervoort P.J.J."/>
            <person name="Wedler H."/>
            <person name="Woesten H.A.B."/>
            <person name="Zeng A.-P."/>
            <person name="van Ooyen A.J.J."/>
            <person name="Visser J."/>
            <person name="Stam H."/>
        </authorList>
    </citation>
    <scope>NUCLEOTIDE SEQUENCE [LARGE SCALE GENOMIC DNA]</scope>
    <source>
        <strain>ATCC MYA-4892 / CBS 513.88 / FGSC A1513</strain>
    </source>
</reference>
<reference key="2">
    <citation type="journal article" date="2024" name="Fungal Biol. Biotechnol.">
        <title>Breaking down barriers: comprehensive functional analysis of the Aspergillus niger chitin synthase repertoire.</title>
        <authorList>
            <person name="Barthel L."/>
            <person name="Cairns T."/>
            <person name="Duda S."/>
            <person name="Mueller H."/>
            <person name="Dobbert B."/>
            <person name="Jung S."/>
            <person name="Briesen H."/>
            <person name="Meyer V."/>
        </authorList>
    </citation>
    <scope>FUNCTION</scope>
    <scope>DISRUPTION PHENOTYPE</scope>
</reference>
<gene>
    <name evidence="5" type="primary">chsE</name>
    <name type="ORF">An12g10380</name>
</gene>